<keyword id="KW-0067">ATP-binding</keyword>
<keyword id="KW-0143">Chaperone</keyword>
<keyword id="KW-0547">Nucleotide-binding</keyword>
<keyword id="KW-0597">Phosphoprotein</keyword>
<keyword id="KW-0346">Stress response</keyword>
<evidence type="ECO:0000255" key="1">
    <source>
        <dbReference type="HAMAP-Rule" id="MF_00332"/>
    </source>
</evidence>
<evidence type="ECO:0000256" key="2">
    <source>
        <dbReference type="SAM" id="MobiDB-lite"/>
    </source>
</evidence>
<dbReference type="EMBL" id="CP000721">
    <property type="protein sequence ID" value="ABR33014.1"/>
    <property type="molecule type" value="Genomic_DNA"/>
</dbReference>
<dbReference type="RefSeq" id="WP_011968174.1">
    <property type="nucleotide sequence ID" value="NC_009617.1"/>
</dbReference>
<dbReference type="SMR" id="A6LRN4"/>
<dbReference type="GeneID" id="66343771"/>
<dbReference type="KEGG" id="cbe:Cbei_0830"/>
<dbReference type="eggNOG" id="COG0443">
    <property type="taxonomic scope" value="Bacteria"/>
</dbReference>
<dbReference type="HOGENOM" id="CLU_005965_2_1_9"/>
<dbReference type="Proteomes" id="UP000000565">
    <property type="component" value="Chromosome"/>
</dbReference>
<dbReference type="GO" id="GO:0005524">
    <property type="term" value="F:ATP binding"/>
    <property type="evidence" value="ECO:0007669"/>
    <property type="project" value="UniProtKB-UniRule"/>
</dbReference>
<dbReference type="GO" id="GO:0140662">
    <property type="term" value="F:ATP-dependent protein folding chaperone"/>
    <property type="evidence" value="ECO:0007669"/>
    <property type="project" value="InterPro"/>
</dbReference>
<dbReference type="GO" id="GO:0051082">
    <property type="term" value="F:unfolded protein binding"/>
    <property type="evidence" value="ECO:0007669"/>
    <property type="project" value="InterPro"/>
</dbReference>
<dbReference type="CDD" id="cd10234">
    <property type="entry name" value="ASKHA_NBD_HSP70_DnaK-like"/>
    <property type="match status" value="1"/>
</dbReference>
<dbReference type="FunFam" id="2.60.34.10:FF:000014">
    <property type="entry name" value="Chaperone protein DnaK HSP70"/>
    <property type="match status" value="1"/>
</dbReference>
<dbReference type="FunFam" id="1.20.1270.10:FF:000001">
    <property type="entry name" value="Molecular chaperone DnaK"/>
    <property type="match status" value="1"/>
</dbReference>
<dbReference type="FunFam" id="3.30.420.40:FF:000071">
    <property type="entry name" value="Molecular chaperone DnaK"/>
    <property type="match status" value="1"/>
</dbReference>
<dbReference type="FunFam" id="3.90.640.10:FF:000003">
    <property type="entry name" value="Molecular chaperone DnaK"/>
    <property type="match status" value="1"/>
</dbReference>
<dbReference type="Gene3D" id="1.20.1270.10">
    <property type="match status" value="1"/>
</dbReference>
<dbReference type="Gene3D" id="3.30.420.40">
    <property type="match status" value="2"/>
</dbReference>
<dbReference type="Gene3D" id="3.90.640.10">
    <property type="entry name" value="Actin, Chain A, domain 4"/>
    <property type="match status" value="1"/>
</dbReference>
<dbReference type="Gene3D" id="2.60.34.10">
    <property type="entry name" value="Substrate Binding Domain Of DNAk, Chain A, domain 1"/>
    <property type="match status" value="1"/>
</dbReference>
<dbReference type="HAMAP" id="MF_00332">
    <property type="entry name" value="DnaK"/>
    <property type="match status" value="1"/>
</dbReference>
<dbReference type="InterPro" id="IPR043129">
    <property type="entry name" value="ATPase_NBD"/>
</dbReference>
<dbReference type="InterPro" id="IPR012725">
    <property type="entry name" value="Chaperone_DnaK"/>
</dbReference>
<dbReference type="InterPro" id="IPR018181">
    <property type="entry name" value="Heat_shock_70_CS"/>
</dbReference>
<dbReference type="InterPro" id="IPR029048">
    <property type="entry name" value="HSP70_C_sf"/>
</dbReference>
<dbReference type="InterPro" id="IPR029047">
    <property type="entry name" value="HSP70_peptide-bd_sf"/>
</dbReference>
<dbReference type="InterPro" id="IPR013126">
    <property type="entry name" value="Hsp_70_fam"/>
</dbReference>
<dbReference type="NCBIfam" id="NF001413">
    <property type="entry name" value="PRK00290.1"/>
    <property type="match status" value="1"/>
</dbReference>
<dbReference type="NCBIfam" id="TIGR02350">
    <property type="entry name" value="prok_dnaK"/>
    <property type="match status" value="1"/>
</dbReference>
<dbReference type="PANTHER" id="PTHR19375">
    <property type="entry name" value="HEAT SHOCK PROTEIN 70KDA"/>
    <property type="match status" value="1"/>
</dbReference>
<dbReference type="Pfam" id="PF00012">
    <property type="entry name" value="HSP70"/>
    <property type="match status" value="1"/>
</dbReference>
<dbReference type="PRINTS" id="PR00301">
    <property type="entry name" value="HEATSHOCK70"/>
</dbReference>
<dbReference type="SUPFAM" id="SSF53067">
    <property type="entry name" value="Actin-like ATPase domain"/>
    <property type="match status" value="2"/>
</dbReference>
<dbReference type="SUPFAM" id="SSF100934">
    <property type="entry name" value="Heat shock protein 70kD (HSP70), C-terminal subdomain"/>
    <property type="match status" value="1"/>
</dbReference>
<dbReference type="SUPFAM" id="SSF100920">
    <property type="entry name" value="Heat shock protein 70kD (HSP70), peptide-binding domain"/>
    <property type="match status" value="1"/>
</dbReference>
<dbReference type="PROSITE" id="PS00297">
    <property type="entry name" value="HSP70_1"/>
    <property type="match status" value="1"/>
</dbReference>
<dbReference type="PROSITE" id="PS00329">
    <property type="entry name" value="HSP70_2"/>
    <property type="match status" value="1"/>
</dbReference>
<dbReference type="PROSITE" id="PS01036">
    <property type="entry name" value="HSP70_3"/>
    <property type="match status" value="1"/>
</dbReference>
<accession>A6LRN4</accession>
<proteinExistence type="inferred from homology"/>
<feature type="chain" id="PRO_1000079219" description="Chaperone protein DnaK">
    <location>
        <begin position="1"/>
        <end position="614"/>
    </location>
</feature>
<feature type="region of interest" description="Disordered" evidence="2">
    <location>
        <begin position="577"/>
        <end position="614"/>
    </location>
</feature>
<feature type="compositionally biased region" description="Low complexity" evidence="2">
    <location>
        <begin position="583"/>
        <end position="597"/>
    </location>
</feature>
<feature type="compositionally biased region" description="Basic and acidic residues" evidence="2">
    <location>
        <begin position="598"/>
        <end position="614"/>
    </location>
</feature>
<feature type="modified residue" description="Phosphothreonine; by autocatalysis" evidence="1">
    <location>
        <position position="175"/>
    </location>
</feature>
<protein>
    <recommendedName>
        <fullName evidence="1">Chaperone protein DnaK</fullName>
    </recommendedName>
    <alternativeName>
        <fullName evidence="1">HSP70</fullName>
    </alternativeName>
    <alternativeName>
        <fullName evidence="1">Heat shock 70 kDa protein</fullName>
    </alternativeName>
    <alternativeName>
        <fullName evidence="1">Heat shock protein 70</fullName>
    </alternativeName>
</protein>
<name>DNAK_CLOB8</name>
<reference key="1">
    <citation type="submission" date="2007-06" db="EMBL/GenBank/DDBJ databases">
        <title>Complete sequence of Clostridium beijerinckii NCIMB 8052.</title>
        <authorList>
            <consortium name="US DOE Joint Genome Institute"/>
            <person name="Copeland A."/>
            <person name="Lucas S."/>
            <person name="Lapidus A."/>
            <person name="Barry K."/>
            <person name="Detter J.C."/>
            <person name="Glavina del Rio T."/>
            <person name="Hammon N."/>
            <person name="Israni S."/>
            <person name="Dalin E."/>
            <person name="Tice H."/>
            <person name="Pitluck S."/>
            <person name="Sims D."/>
            <person name="Brettin T."/>
            <person name="Bruce D."/>
            <person name="Tapia R."/>
            <person name="Brainard J."/>
            <person name="Schmutz J."/>
            <person name="Larimer F."/>
            <person name="Land M."/>
            <person name="Hauser L."/>
            <person name="Kyrpides N."/>
            <person name="Mikhailova N."/>
            <person name="Bennet G."/>
            <person name="Cann I."/>
            <person name="Chen J.-S."/>
            <person name="Contreras A.L."/>
            <person name="Jones D."/>
            <person name="Kashket E."/>
            <person name="Mitchell W."/>
            <person name="Stoddard S."/>
            <person name="Schwarz W."/>
            <person name="Qureshi N."/>
            <person name="Young M."/>
            <person name="Shi Z."/>
            <person name="Ezeji T."/>
            <person name="White B."/>
            <person name="Blaschek H."/>
            <person name="Richardson P."/>
        </authorList>
    </citation>
    <scope>NUCLEOTIDE SEQUENCE [LARGE SCALE GENOMIC DNA]</scope>
    <source>
        <strain>ATCC 51743 / NCIMB 8052</strain>
    </source>
</reference>
<organism>
    <name type="scientific">Clostridium beijerinckii (strain ATCC 51743 / NCIMB 8052)</name>
    <name type="common">Clostridium acetobutylicum</name>
    <dbReference type="NCBI Taxonomy" id="290402"/>
    <lineage>
        <taxon>Bacteria</taxon>
        <taxon>Bacillati</taxon>
        <taxon>Bacillota</taxon>
        <taxon>Clostridia</taxon>
        <taxon>Eubacteriales</taxon>
        <taxon>Clostridiaceae</taxon>
        <taxon>Clostridium</taxon>
    </lineage>
</organism>
<sequence length="614" mass="65342">MGKIIGIDLGTTNSCVAVMEGGEPTVIANSEGARTTPSVVSFQANGERLVGQVAKRQAITNPDKTVISIKRHMGTGYKVDIDGKQYSPQEISAMVLQKIKADAESYLGETVTQAVITVPAYFNDSQRQATKDAGKIAGLEVLRIINEPTAASLAYGLDKTDSAHKILVYDLGGGTFDVSILDLGDGVFEVLSTNGDTKLGGDDFDEKIMKYIADEFKASNGIDLMQDKMAVQRLKEASEKAKIELSASQQTNINLPFITADATGPKHIDLTLSRAKFNEITHDLVERSIEPMRKALADAKLSLNDIDKIILVGGSTRIPAVVEAVKNFTGKEPSKGVNPDECVAVGAAIQAGVLTGEVKDVVLLDVTPLTLGIETAGGIATPLIERNTTIPTKKSQVFSTAADNQTSVEINVVQGERQMAMDNKSLGQFTLSGIAPAPRGIPQIEVTFDIDANGIVKVSALDKGTGKEANITITASTNLSDDEVDKAVKEAEKFAEEDKKRKEKVEAVNNADQTIYQIEKTLNEVGDKATEDEKAAVRAKIEDLKKVKDGDDVEATKAAIEAVNQSFYPIATKMYQQAGGAEGAADPNAAAGGAQSAPHDDNVVDADFKVDEDK</sequence>
<gene>
    <name evidence="1" type="primary">dnaK</name>
    <name type="ordered locus">Cbei_0830</name>
</gene>
<comment type="function">
    <text evidence="1">Acts as a chaperone.</text>
</comment>
<comment type="induction">
    <text evidence="1">By stress conditions e.g. heat shock.</text>
</comment>
<comment type="similarity">
    <text evidence="1">Belongs to the heat shock protein 70 family.</text>
</comment>